<dbReference type="EC" id="3.5.1.-" evidence="1"/>
<dbReference type="EMBL" id="CP000468">
    <property type="protein sequence ID" value="ABJ00404.1"/>
    <property type="molecule type" value="Genomic_DNA"/>
</dbReference>
<dbReference type="RefSeq" id="WP_001331944.1">
    <property type="nucleotide sequence ID" value="NZ_CADILS010000016.1"/>
</dbReference>
<dbReference type="SMR" id="A1A9R4"/>
<dbReference type="ESTHER" id="ecoli-rutD">
    <property type="family name" value="RutD"/>
</dbReference>
<dbReference type="KEGG" id="ecv:APECO1_100"/>
<dbReference type="HOGENOM" id="CLU_020336_50_1_6"/>
<dbReference type="Proteomes" id="UP000008216">
    <property type="component" value="Chromosome"/>
</dbReference>
<dbReference type="GO" id="GO:0016020">
    <property type="term" value="C:membrane"/>
    <property type="evidence" value="ECO:0007669"/>
    <property type="project" value="TreeGrafter"/>
</dbReference>
<dbReference type="GO" id="GO:0016811">
    <property type="term" value="F:hydrolase activity, acting on carbon-nitrogen (but not peptide) bonds, in linear amides"/>
    <property type="evidence" value="ECO:0007669"/>
    <property type="project" value="InterPro"/>
</dbReference>
<dbReference type="GO" id="GO:0019740">
    <property type="term" value="P:nitrogen utilization"/>
    <property type="evidence" value="ECO:0007669"/>
    <property type="project" value="UniProtKB-UniRule"/>
</dbReference>
<dbReference type="GO" id="GO:0006212">
    <property type="term" value="P:uracil catabolic process"/>
    <property type="evidence" value="ECO:0007669"/>
    <property type="project" value="UniProtKB-UniRule"/>
</dbReference>
<dbReference type="FunFam" id="3.40.50.1820:FF:000052">
    <property type="entry name" value="Putative aminoacrylate hydrolase RutD"/>
    <property type="match status" value="1"/>
</dbReference>
<dbReference type="Gene3D" id="3.40.50.1820">
    <property type="entry name" value="alpha/beta hydrolase"/>
    <property type="match status" value="1"/>
</dbReference>
<dbReference type="HAMAP" id="MF_00832">
    <property type="entry name" value="RutD"/>
    <property type="match status" value="1"/>
</dbReference>
<dbReference type="InterPro" id="IPR000073">
    <property type="entry name" value="AB_hydrolase_1"/>
</dbReference>
<dbReference type="InterPro" id="IPR029058">
    <property type="entry name" value="AB_hydrolase_fold"/>
</dbReference>
<dbReference type="InterPro" id="IPR050266">
    <property type="entry name" value="AB_hydrolase_sf"/>
</dbReference>
<dbReference type="InterPro" id="IPR019913">
    <property type="entry name" value="Pyrimidine_utilisation_RutD"/>
</dbReference>
<dbReference type="NCBIfam" id="TIGR03611">
    <property type="entry name" value="RutD"/>
    <property type="match status" value="1"/>
</dbReference>
<dbReference type="PANTHER" id="PTHR43798:SF27">
    <property type="entry name" value="HYDROLASE ALPHA_BETA HYDROLASE FOLD FAMILY"/>
    <property type="match status" value="1"/>
</dbReference>
<dbReference type="PANTHER" id="PTHR43798">
    <property type="entry name" value="MONOACYLGLYCEROL LIPASE"/>
    <property type="match status" value="1"/>
</dbReference>
<dbReference type="Pfam" id="PF00561">
    <property type="entry name" value="Abhydrolase_1"/>
    <property type="match status" value="1"/>
</dbReference>
<dbReference type="PRINTS" id="PR00111">
    <property type="entry name" value="ABHYDROLASE"/>
</dbReference>
<dbReference type="SUPFAM" id="SSF53474">
    <property type="entry name" value="alpha/beta-Hydrolases"/>
    <property type="match status" value="1"/>
</dbReference>
<reference key="1">
    <citation type="journal article" date="2007" name="J. Bacteriol.">
        <title>The genome sequence of avian pathogenic Escherichia coli strain O1:K1:H7 shares strong similarities with human extraintestinal pathogenic E. coli genomes.</title>
        <authorList>
            <person name="Johnson T.J."/>
            <person name="Kariyawasam S."/>
            <person name="Wannemuehler Y."/>
            <person name="Mangiamele P."/>
            <person name="Johnson S.J."/>
            <person name="Doetkott C."/>
            <person name="Skyberg J.A."/>
            <person name="Lynne A.M."/>
            <person name="Johnson J.R."/>
            <person name="Nolan L.K."/>
        </authorList>
    </citation>
    <scope>NUCLEOTIDE SEQUENCE [LARGE SCALE GENOMIC DNA]</scope>
</reference>
<keyword id="KW-0378">Hydrolase</keyword>
<keyword id="KW-1185">Reference proteome</keyword>
<proteinExistence type="inferred from homology"/>
<feature type="chain" id="PRO_0000402956" description="Putative carbamate hydrolase RutD">
    <location>
        <begin position="1"/>
        <end position="266"/>
    </location>
</feature>
<protein>
    <recommendedName>
        <fullName evidence="1">Putative carbamate hydrolase RutD</fullName>
        <ecNumber evidence="1">3.5.1.-</ecNumber>
    </recommendedName>
    <alternativeName>
        <fullName evidence="1">Aminohydrolase</fullName>
    </alternativeName>
</protein>
<gene>
    <name evidence="1" type="primary">rutD</name>
    <name type="ordered locus">Ecok1_09100</name>
    <name type="ORF">APECO1_100</name>
</gene>
<comment type="function">
    <text evidence="1">Involved in pyrimidine catabolism. May facilitate the hydrolysis of carbamate, a reaction that can also occur spontaneously.</text>
</comment>
<comment type="catalytic activity">
    <reaction evidence="1">
        <text>carbamate + 2 H(+) = NH4(+) + CO2</text>
        <dbReference type="Rhea" id="RHEA:15649"/>
        <dbReference type="ChEBI" id="CHEBI:13941"/>
        <dbReference type="ChEBI" id="CHEBI:15378"/>
        <dbReference type="ChEBI" id="CHEBI:16526"/>
        <dbReference type="ChEBI" id="CHEBI:28938"/>
    </reaction>
</comment>
<comment type="similarity">
    <text evidence="1">Belongs to the AB hydrolase superfamily. Hydrolase RutD family.</text>
</comment>
<sequence>MKLSLSPPPYADAPVVVLISGLGGSGSYWLPQLAVLVQEYQVVCYDQRGTGNNPDTLAEDYSIAQMAAELHQALVAAGIERYAVVGHALGALVGMQLALDYPASVTVLVSVNGWLRINAHTRRCFQVREQLLHSGGAQAWVEAQPLFLYPADWMAARAPRLEAEDALALAHFQGKNNLLRRLNALKRADFSHHADRIRCPVQIICASDDLLVPTACSSELHAALPDSQKMVMRYGGHACNVTDPETFNALLLNGLASLLHHREAAL</sequence>
<name>RUTD_ECOK1</name>
<organism>
    <name type="scientific">Escherichia coli O1:K1 / APEC</name>
    <dbReference type="NCBI Taxonomy" id="405955"/>
    <lineage>
        <taxon>Bacteria</taxon>
        <taxon>Pseudomonadati</taxon>
        <taxon>Pseudomonadota</taxon>
        <taxon>Gammaproteobacteria</taxon>
        <taxon>Enterobacterales</taxon>
        <taxon>Enterobacteriaceae</taxon>
        <taxon>Escherichia</taxon>
    </lineage>
</organism>
<evidence type="ECO:0000255" key="1">
    <source>
        <dbReference type="HAMAP-Rule" id="MF_00832"/>
    </source>
</evidence>
<accession>A1A9R4</accession>